<proteinExistence type="evidence at protein level"/>
<protein>
    <recommendedName>
        <fullName evidence="1">Cytidylate kinase</fullName>
        <shortName evidence="1">CK</shortName>
        <ecNumber evidence="1">2.7.4.25</ecNumber>
    </recommendedName>
    <alternativeName>
        <fullName evidence="1">Cytidine monophosphate kinase</fullName>
        <shortName evidence="1">CMP kinase</shortName>
    </alternativeName>
</protein>
<accession>B1JRD8</accession>
<dbReference type="EC" id="2.7.4.25" evidence="1"/>
<dbReference type="EMBL" id="CP000950">
    <property type="protein sequence ID" value="ACA68946.1"/>
    <property type="molecule type" value="Genomic_DNA"/>
</dbReference>
<dbReference type="RefSeq" id="WP_002211324.1">
    <property type="nucleotide sequence ID" value="NZ_CP009792.1"/>
</dbReference>
<dbReference type="PDB" id="4E22">
    <property type="method" value="X-ray"/>
    <property type="resolution" value="2.32 A"/>
    <property type="chains" value="A=1-230"/>
</dbReference>
<dbReference type="PDBsum" id="4E22"/>
<dbReference type="SMR" id="B1JRD8"/>
<dbReference type="GeneID" id="57977187"/>
<dbReference type="KEGG" id="ypy:YPK_2669"/>
<dbReference type="PATRIC" id="fig|502800.11.peg.3369"/>
<dbReference type="EvolutionaryTrace" id="B1JRD8"/>
<dbReference type="GO" id="GO:0005829">
    <property type="term" value="C:cytosol"/>
    <property type="evidence" value="ECO:0007669"/>
    <property type="project" value="TreeGrafter"/>
</dbReference>
<dbReference type="GO" id="GO:0005524">
    <property type="term" value="F:ATP binding"/>
    <property type="evidence" value="ECO:0007669"/>
    <property type="project" value="UniProtKB-UniRule"/>
</dbReference>
<dbReference type="GO" id="GO:0036430">
    <property type="term" value="F:CMP kinase activity"/>
    <property type="evidence" value="ECO:0007669"/>
    <property type="project" value="RHEA"/>
</dbReference>
<dbReference type="GO" id="GO:0036431">
    <property type="term" value="F:dCMP kinase activity"/>
    <property type="evidence" value="ECO:0007669"/>
    <property type="project" value="RHEA"/>
</dbReference>
<dbReference type="GO" id="GO:0015949">
    <property type="term" value="P:nucleobase-containing small molecule interconversion"/>
    <property type="evidence" value="ECO:0007669"/>
    <property type="project" value="TreeGrafter"/>
</dbReference>
<dbReference type="GO" id="GO:0006220">
    <property type="term" value="P:pyrimidine nucleotide metabolic process"/>
    <property type="evidence" value="ECO:0007669"/>
    <property type="project" value="UniProtKB-UniRule"/>
</dbReference>
<dbReference type="CDD" id="cd02020">
    <property type="entry name" value="CMPK"/>
    <property type="match status" value="1"/>
</dbReference>
<dbReference type="FunFam" id="3.40.50.300:FF:000262">
    <property type="entry name" value="Cytidylate kinase"/>
    <property type="match status" value="1"/>
</dbReference>
<dbReference type="Gene3D" id="3.40.50.300">
    <property type="entry name" value="P-loop containing nucleotide triphosphate hydrolases"/>
    <property type="match status" value="1"/>
</dbReference>
<dbReference type="HAMAP" id="MF_00238">
    <property type="entry name" value="Cytidyl_kinase_type1"/>
    <property type="match status" value="1"/>
</dbReference>
<dbReference type="InterPro" id="IPR003136">
    <property type="entry name" value="Cytidylate_kin"/>
</dbReference>
<dbReference type="InterPro" id="IPR011994">
    <property type="entry name" value="Cytidylate_kinase_dom"/>
</dbReference>
<dbReference type="InterPro" id="IPR027417">
    <property type="entry name" value="P-loop_NTPase"/>
</dbReference>
<dbReference type="NCBIfam" id="TIGR00017">
    <property type="entry name" value="cmk"/>
    <property type="match status" value="1"/>
</dbReference>
<dbReference type="PANTHER" id="PTHR21299:SF2">
    <property type="entry name" value="CYTIDYLATE KINASE"/>
    <property type="match status" value="1"/>
</dbReference>
<dbReference type="PANTHER" id="PTHR21299">
    <property type="entry name" value="CYTIDYLATE KINASE/PANTOATE-BETA-ALANINE LIGASE"/>
    <property type="match status" value="1"/>
</dbReference>
<dbReference type="Pfam" id="PF02224">
    <property type="entry name" value="Cytidylate_kin"/>
    <property type="match status" value="1"/>
</dbReference>
<dbReference type="SUPFAM" id="SSF52540">
    <property type="entry name" value="P-loop containing nucleoside triphosphate hydrolases"/>
    <property type="match status" value="1"/>
</dbReference>
<evidence type="ECO:0000255" key="1">
    <source>
        <dbReference type="HAMAP-Rule" id="MF_00238"/>
    </source>
</evidence>
<evidence type="ECO:0007829" key="2">
    <source>
        <dbReference type="PDB" id="4E22"/>
    </source>
</evidence>
<sequence>MTAIAPVITVDGPSGAGKGTLCKALAESLNWRLLDSGAIYRVLALAALHHQVDISTEEALVPLAAHLDVRFVSQNGQLQVILEGEDVSNEIRTETVGNTASQAAAFPRVREALLRRQRAFREAPGLIADGRDMGTIVFPDAPVKIFLDASSQERAHRRMLQLQERGFNVNFERLLAEIQERDNRDRNRSVAPLVPAADALVLDSTSMSIEQVIEQALAYAQRILALPLKK</sequence>
<keyword id="KW-0002">3D-structure</keyword>
<keyword id="KW-0067">ATP-binding</keyword>
<keyword id="KW-0963">Cytoplasm</keyword>
<keyword id="KW-0418">Kinase</keyword>
<keyword id="KW-0547">Nucleotide-binding</keyword>
<keyword id="KW-0808">Transferase</keyword>
<organism>
    <name type="scientific">Yersinia pseudotuberculosis serotype O:3 (strain YPIII)</name>
    <dbReference type="NCBI Taxonomy" id="502800"/>
    <lineage>
        <taxon>Bacteria</taxon>
        <taxon>Pseudomonadati</taxon>
        <taxon>Pseudomonadota</taxon>
        <taxon>Gammaproteobacteria</taxon>
        <taxon>Enterobacterales</taxon>
        <taxon>Yersiniaceae</taxon>
        <taxon>Yersinia</taxon>
    </lineage>
</organism>
<gene>
    <name evidence="1" type="primary">cmk</name>
    <name type="ordered locus">YPK_2669</name>
</gene>
<feature type="chain" id="PRO_1000100707" description="Cytidylate kinase">
    <location>
        <begin position="1"/>
        <end position="230"/>
    </location>
</feature>
<feature type="binding site" evidence="1">
    <location>
        <begin position="12"/>
        <end position="20"/>
    </location>
    <ligand>
        <name>ATP</name>
        <dbReference type="ChEBI" id="CHEBI:30616"/>
    </ligand>
</feature>
<feature type="turn" evidence="2">
    <location>
        <begin position="2"/>
        <end position="4"/>
    </location>
</feature>
<feature type="strand" evidence="2">
    <location>
        <begin position="7"/>
        <end position="11"/>
    </location>
</feature>
<feature type="helix" evidence="2">
    <location>
        <begin position="18"/>
        <end position="28"/>
    </location>
</feature>
<feature type="strand" evidence="2">
    <location>
        <begin position="32"/>
        <end position="35"/>
    </location>
</feature>
<feature type="helix" evidence="2">
    <location>
        <begin position="36"/>
        <end position="49"/>
    </location>
</feature>
<feature type="strand" evidence="2">
    <location>
        <begin position="54"/>
        <end position="57"/>
    </location>
</feature>
<feature type="helix" evidence="2">
    <location>
        <begin position="60"/>
        <end position="65"/>
    </location>
</feature>
<feature type="strand" evidence="2">
    <location>
        <begin position="69"/>
        <end position="74"/>
    </location>
</feature>
<feature type="strand" evidence="2">
    <location>
        <begin position="77"/>
        <end position="82"/>
    </location>
</feature>
<feature type="helix" evidence="2">
    <location>
        <begin position="90"/>
        <end position="92"/>
    </location>
</feature>
<feature type="helix" evidence="2">
    <location>
        <begin position="94"/>
        <end position="103"/>
    </location>
</feature>
<feature type="helix" evidence="2">
    <location>
        <begin position="107"/>
        <end position="118"/>
    </location>
</feature>
<feature type="strand" evidence="2">
    <location>
        <begin position="126"/>
        <end position="132"/>
    </location>
</feature>
<feature type="helix" evidence="2">
    <location>
        <begin position="133"/>
        <end position="137"/>
    </location>
</feature>
<feature type="strand" evidence="2">
    <location>
        <begin position="142"/>
        <end position="148"/>
    </location>
</feature>
<feature type="helix" evidence="2">
    <location>
        <begin position="151"/>
        <end position="165"/>
    </location>
</feature>
<feature type="helix" evidence="2">
    <location>
        <begin position="171"/>
        <end position="178"/>
    </location>
</feature>
<feature type="strand" evidence="2">
    <location>
        <begin position="199"/>
        <end position="203"/>
    </location>
</feature>
<feature type="strand" evidence="2">
    <location>
        <begin position="205"/>
        <end position="207"/>
    </location>
</feature>
<feature type="helix" evidence="2">
    <location>
        <begin position="209"/>
        <end position="223"/>
    </location>
</feature>
<comment type="catalytic activity">
    <reaction evidence="1">
        <text>CMP + ATP = CDP + ADP</text>
        <dbReference type="Rhea" id="RHEA:11600"/>
        <dbReference type="ChEBI" id="CHEBI:30616"/>
        <dbReference type="ChEBI" id="CHEBI:58069"/>
        <dbReference type="ChEBI" id="CHEBI:60377"/>
        <dbReference type="ChEBI" id="CHEBI:456216"/>
        <dbReference type="EC" id="2.7.4.25"/>
    </reaction>
</comment>
<comment type="catalytic activity">
    <reaction evidence="1">
        <text>dCMP + ATP = dCDP + ADP</text>
        <dbReference type="Rhea" id="RHEA:25094"/>
        <dbReference type="ChEBI" id="CHEBI:30616"/>
        <dbReference type="ChEBI" id="CHEBI:57566"/>
        <dbReference type="ChEBI" id="CHEBI:58593"/>
        <dbReference type="ChEBI" id="CHEBI:456216"/>
        <dbReference type="EC" id="2.7.4.25"/>
    </reaction>
</comment>
<comment type="subcellular location">
    <subcellularLocation>
        <location evidence="1">Cytoplasm</location>
    </subcellularLocation>
</comment>
<comment type="similarity">
    <text evidence="1">Belongs to the cytidylate kinase family. Type 1 subfamily.</text>
</comment>
<name>KCY_YERPY</name>
<reference key="1">
    <citation type="submission" date="2008-02" db="EMBL/GenBank/DDBJ databases">
        <title>Complete sequence of Yersinia pseudotuberculosis YPIII.</title>
        <authorList>
            <consortium name="US DOE Joint Genome Institute"/>
            <person name="Copeland A."/>
            <person name="Lucas S."/>
            <person name="Lapidus A."/>
            <person name="Glavina del Rio T."/>
            <person name="Dalin E."/>
            <person name="Tice H."/>
            <person name="Bruce D."/>
            <person name="Goodwin L."/>
            <person name="Pitluck S."/>
            <person name="Munk A.C."/>
            <person name="Brettin T."/>
            <person name="Detter J.C."/>
            <person name="Han C."/>
            <person name="Tapia R."/>
            <person name="Schmutz J."/>
            <person name="Larimer F."/>
            <person name="Land M."/>
            <person name="Hauser L."/>
            <person name="Challacombe J.F."/>
            <person name="Green L."/>
            <person name="Lindler L.E."/>
            <person name="Nikolich M.P."/>
            <person name="Richardson P."/>
        </authorList>
    </citation>
    <scope>NUCLEOTIDE SEQUENCE [LARGE SCALE GENOMIC DNA]</scope>
    <source>
        <strain>YPIII</strain>
    </source>
</reference>